<organism>
    <name type="scientific">Homo sapiens</name>
    <name type="common">Human</name>
    <dbReference type="NCBI Taxonomy" id="9606"/>
    <lineage>
        <taxon>Eukaryota</taxon>
        <taxon>Metazoa</taxon>
        <taxon>Chordata</taxon>
        <taxon>Craniata</taxon>
        <taxon>Vertebrata</taxon>
        <taxon>Euteleostomi</taxon>
        <taxon>Mammalia</taxon>
        <taxon>Eutheria</taxon>
        <taxon>Euarchontoglires</taxon>
        <taxon>Primates</taxon>
        <taxon>Haplorrhini</taxon>
        <taxon>Catarrhini</taxon>
        <taxon>Hominidae</taxon>
        <taxon>Homo</taxon>
    </lineage>
</organism>
<keyword id="KW-0002">3D-structure</keyword>
<keyword id="KW-0010">Activator</keyword>
<keyword id="KW-0025">Alternative splicing</keyword>
<keyword id="KW-0034">Amyloid</keyword>
<keyword id="KW-0966">Cell projection</keyword>
<keyword id="KW-0963">Cytoplasm</keyword>
<keyword id="KW-0488">Methylation</keyword>
<keyword id="KW-0539">Nucleus</keyword>
<keyword id="KW-0597">Phosphoprotein</keyword>
<keyword id="KW-1267">Proteomics identification</keyword>
<keyword id="KW-1185">Reference proteome</keyword>
<keyword id="KW-0677">Repeat</keyword>
<keyword id="KW-0678">Repressor</keyword>
<keyword id="KW-0694">RNA-binding</keyword>
<keyword id="KW-0770">Synapse</keyword>
<keyword id="KW-0810">Translation regulation</keyword>
<keyword id="KW-0832">Ubl conjugation</keyword>
<accession>Q8NE35</accession>
<accession>Q5T389</accession>
<accession>Q9NQJ7</accession>
<accession>Q9Y2E9</accession>
<protein>
    <recommendedName>
        <fullName>Cytoplasmic polyadenylation element-binding protein 3</fullName>
        <shortName>CPE-BP3</shortName>
        <shortName>CPE-binding protein 3</shortName>
        <shortName>hCPEB-3</shortName>
    </recommendedName>
</protein>
<dbReference type="EMBL" id="AB023157">
    <property type="protein sequence ID" value="BAA76784.2"/>
    <property type="status" value="ALT_INIT"/>
    <property type="molecule type" value="mRNA"/>
</dbReference>
<dbReference type="EMBL" id="AL158040">
    <property type="status" value="NOT_ANNOTATED_CDS"/>
    <property type="molecule type" value="Genomic_DNA"/>
</dbReference>
<dbReference type="EMBL" id="AL365398">
    <property type="status" value="NOT_ANNOTATED_CDS"/>
    <property type="molecule type" value="Genomic_DNA"/>
</dbReference>
<dbReference type="EMBL" id="BC036444">
    <property type="protein sequence ID" value="AAH36444.1"/>
    <property type="molecule type" value="mRNA"/>
</dbReference>
<dbReference type="CCDS" id="CCDS31246.1">
    <molecule id="Q8NE35-1"/>
</dbReference>
<dbReference type="CCDS" id="CCDS53553.1">
    <molecule id="Q8NE35-2"/>
</dbReference>
<dbReference type="RefSeq" id="NP_001171608.1">
    <molecule id="Q8NE35-2"/>
    <property type="nucleotide sequence ID" value="NM_001178137.2"/>
</dbReference>
<dbReference type="RefSeq" id="NP_055727.3">
    <molecule id="Q8NE35-1"/>
    <property type="nucleotide sequence ID" value="NM_014912.4"/>
</dbReference>
<dbReference type="RefSeq" id="XP_005269687.1">
    <molecule id="Q8NE35-2"/>
    <property type="nucleotide sequence ID" value="XM_005269630.5"/>
</dbReference>
<dbReference type="RefSeq" id="XP_047280769.1">
    <molecule id="Q8NE35-2"/>
    <property type="nucleotide sequence ID" value="XM_047424813.1"/>
</dbReference>
<dbReference type="RefSeq" id="XP_047280770.1">
    <molecule id="Q8NE35-2"/>
    <property type="nucleotide sequence ID" value="XM_047424814.1"/>
</dbReference>
<dbReference type="RefSeq" id="XP_054221158.1">
    <molecule id="Q8NE35-2"/>
    <property type="nucleotide sequence ID" value="XM_054365183.1"/>
</dbReference>
<dbReference type="RefSeq" id="XP_054221159.1">
    <molecule id="Q8NE35-2"/>
    <property type="nucleotide sequence ID" value="XM_054365184.1"/>
</dbReference>
<dbReference type="PDB" id="2DNL">
    <property type="method" value="NMR"/>
    <property type="chains" value="A=440-540"/>
</dbReference>
<dbReference type="PDB" id="2RUG">
    <property type="method" value="NMR"/>
    <property type="chains" value="A=440-540"/>
</dbReference>
<dbReference type="PDB" id="7N2E">
    <property type="method" value="EM"/>
    <property type="resolution" value="1.00 A"/>
    <property type="chains" value="C=154-161"/>
</dbReference>
<dbReference type="PDB" id="7N2F">
    <property type="method" value="EM"/>
    <property type="resolution" value="1.20 A"/>
    <property type="chains" value="A=154-161"/>
</dbReference>
<dbReference type="PDB" id="7N2G">
    <property type="method" value="EM"/>
    <property type="resolution" value="1.20 A"/>
    <property type="chains" value="A=154-161"/>
</dbReference>
<dbReference type="PDB" id="8SPA">
    <property type="method" value="EM"/>
    <property type="resolution" value="3.00 A"/>
    <property type="chains" value="A/B/C/D/E=103-151"/>
</dbReference>
<dbReference type="PDBsum" id="2DNL"/>
<dbReference type="PDBsum" id="2RUG"/>
<dbReference type="PDBsum" id="7N2E"/>
<dbReference type="PDBsum" id="7N2F"/>
<dbReference type="PDBsum" id="7N2G"/>
<dbReference type="PDBsum" id="8SPA"/>
<dbReference type="EMDB" id="EMD-40677"/>
<dbReference type="SMR" id="Q8NE35"/>
<dbReference type="BioGRID" id="116521">
    <property type="interactions" value="6"/>
</dbReference>
<dbReference type="FunCoup" id="Q8NE35">
    <property type="interactions" value="718"/>
</dbReference>
<dbReference type="IntAct" id="Q8NE35">
    <property type="interactions" value="10"/>
</dbReference>
<dbReference type="MINT" id="Q8NE35"/>
<dbReference type="STRING" id="9606.ENSP00000265997"/>
<dbReference type="iPTMnet" id="Q8NE35"/>
<dbReference type="PhosphoSitePlus" id="Q8NE35"/>
<dbReference type="BioMuta" id="CPEB3"/>
<dbReference type="DMDM" id="119368633"/>
<dbReference type="jPOST" id="Q8NE35"/>
<dbReference type="MassIVE" id="Q8NE35"/>
<dbReference type="PaxDb" id="9606-ENSP00000482128"/>
<dbReference type="PeptideAtlas" id="Q8NE35"/>
<dbReference type="ProteomicsDB" id="73124">
    <molecule id="Q8NE35-1"/>
</dbReference>
<dbReference type="ProteomicsDB" id="73125">
    <molecule id="Q8NE35-2"/>
</dbReference>
<dbReference type="Antibodypedia" id="30391">
    <property type="antibodies" value="113 antibodies from 19 providers"/>
</dbReference>
<dbReference type="DNASU" id="22849"/>
<dbReference type="Ensembl" id="ENST00000265997.5">
    <molecule id="Q8NE35-1"/>
    <property type="protein sequence ID" value="ENSP00000265997.4"/>
    <property type="gene ID" value="ENSG00000107864.15"/>
</dbReference>
<dbReference type="Ensembl" id="ENST00000412050.8">
    <molecule id="Q8NE35-2"/>
    <property type="protein sequence ID" value="ENSP00000398310.2"/>
    <property type="gene ID" value="ENSG00000107864.15"/>
</dbReference>
<dbReference type="Ensembl" id="ENST00000614585.4">
    <molecule id="Q8NE35-1"/>
    <property type="protein sequence ID" value="ENSP00000482128.1"/>
    <property type="gene ID" value="ENSG00000107864.15"/>
</dbReference>
<dbReference type="GeneID" id="22849"/>
<dbReference type="KEGG" id="hsa:22849"/>
<dbReference type="MANE-Select" id="ENST00000265997.5">
    <property type="protein sequence ID" value="ENSP00000265997.4"/>
    <property type="RefSeq nucleotide sequence ID" value="NM_014912.5"/>
    <property type="RefSeq protein sequence ID" value="NP_055727.3"/>
</dbReference>
<dbReference type="UCSC" id="uc001khv.3">
    <molecule id="Q8NE35-1"/>
    <property type="organism name" value="human"/>
</dbReference>
<dbReference type="AGR" id="HGNC:21746"/>
<dbReference type="CTD" id="22849"/>
<dbReference type="DisGeNET" id="22849"/>
<dbReference type="GeneCards" id="CPEB3"/>
<dbReference type="HGNC" id="HGNC:21746">
    <property type="gene designation" value="CPEB3"/>
</dbReference>
<dbReference type="HPA" id="ENSG00000107864">
    <property type="expression patterns" value="Tissue enhanced (liver)"/>
</dbReference>
<dbReference type="MIM" id="610606">
    <property type="type" value="gene"/>
</dbReference>
<dbReference type="neXtProt" id="NX_Q8NE35"/>
<dbReference type="OpenTargets" id="ENSG00000107864"/>
<dbReference type="PharmGKB" id="PA134903478"/>
<dbReference type="VEuPathDB" id="HostDB:ENSG00000107864"/>
<dbReference type="eggNOG" id="KOG0129">
    <property type="taxonomic scope" value="Eukaryota"/>
</dbReference>
<dbReference type="GeneTree" id="ENSGT00940000158949"/>
<dbReference type="HOGENOM" id="CLU_014948_2_1_1"/>
<dbReference type="InParanoid" id="Q8NE35"/>
<dbReference type="OMA" id="CWAAIHA"/>
<dbReference type="OrthoDB" id="10033548at2759"/>
<dbReference type="PAN-GO" id="Q8NE35">
    <property type="GO annotations" value="10 GO annotations based on evolutionary models"/>
</dbReference>
<dbReference type="PhylomeDB" id="Q8NE35"/>
<dbReference type="TreeFam" id="TF317658"/>
<dbReference type="PathwayCommons" id="Q8NE35"/>
<dbReference type="SignaLink" id="Q8NE35"/>
<dbReference type="BioGRID-ORCS" id="22849">
    <property type="hits" value="12 hits in 1146 CRISPR screens"/>
</dbReference>
<dbReference type="CD-CODE" id="232F8A39">
    <property type="entry name" value="P-body"/>
</dbReference>
<dbReference type="CD-CODE" id="DEE660B4">
    <property type="entry name" value="Stress granule"/>
</dbReference>
<dbReference type="ChiTaRS" id="CPEB3">
    <property type="organism name" value="human"/>
</dbReference>
<dbReference type="EvolutionaryTrace" id="Q8NE35"/>
<dbReference type="GenomeRNAi" id="22849"/>
<dbReference type="Pharos" id="Q8NE35">
    <property type="development level" value="Tbio"/>
</dbReference>
<dbReference type="PRO" id="PR:Q8NE35"/>
<dbReference type="Proteomes" id="UP000005640">
    <property type="component" value="Chromosome 10"/>
</dbReference>
<dbReference type="RNAct" id="Q8NE35">
    <property type="molecule type" value="protein"/>
</dbReference>
<dbReference type="Bgee" id="ENSG00000107864">
    <property type="expression patterns" value="Expressed in buccal mucosa cell and 171 other cell types or tissues"/>
</dbReference>
<dbReference type="ExpressionAtlas" id="Q8NE35">
    <property type="expression patterns" value="baseline and differential"/>
</dbReference>
<dbReference type="GO" id="GO:0097440">
    <property type="term" value="C:apical dendrite"/>
    <property type="evidence" value="ECO:0000250"/>
    <property type="project" value="UniProtKB"/>
</dbReference>
<dbReference type="GO" id="GO:0030014">
    <property type="term" value="C:CCR4-NOT complex"/>
    <property type="evidence" value="ECO:0000314"/>
    <property type="project" value="UniProtKB"/>
</dbReference>
<dbReference type="GO" id="GO:0005737">
    <property type="term" value="C:cytoplasm"/>
    <property type="evidence" value="ECO:0000314"/>
    <property type="project" value="UniProtKB"/>
</dbReference>
<dbReference type="GO" id="GO:0005829">
    <property type="term" value="C:cytosol"/>
    <property type="evidence" value="ECO:0000314"/>
    <property type="project" value="HPA"/>
</dbReference>
<dbReference type="GO" id="GO:0030425">
    <property type="term" value="C:dendrite"/>
    <property type="evidence" value="ECO:0000250"/>
    <property type="project" value="UniProtKB"/>
</dbReference>
<dbReference type="GO" id="GO:0030496">
    <property type="term" value="C:midbody"/>
    <property type="evidence" value="ECO:0000314"/>
    <property type="project" value="HPA"/>
</dbReference>
<dbReference type="GO" id="GO:0043005">
    <property type="term" value="C:neuron projection"/>
    <property type="evidence" value="ECO:0000314"/>
    <property type="project" value="UniProtKB"/>
</dbReference>
<dbReference type="GO" id="GO:0005654">
    <property type="term" value="C:nucleoplasm"/>
    <property type="evidence" value="ECO:0000314"/>
    <property type="project" value="HPA"/>
</dbReference>
<dbReference type="GO" id="GO:0005634">
    <property type="term" value="C:nucleus"/>
    <property type="evidence" value="ECO:0000314"/>
    <property type="project" value="UniProtKB"/>
</dbReference>
<dbReference type="GO" id="GO:0005886">
    <property type="term" value="C:plasma membrane"/>
    <property type="evidence" value="ECO:0000314"/>
    <property type="project" value="HPA"/>
</dbReference>
<dbReference type="GO" id="GO:0014069">
    <property type="term" value="C:postsynaptic density"/>
    <property type="evidence" value="ECO:0007669"/>
    <property type="project" value="UniProtKB-SubCell"/>
</dbReference>
<dbReference type="GO" id="GO:0045202">
    <property type="term" value="C:synapse"/>
    <property type="evidence" value="ECO:0000250"/>
    <property type="project" value="UniProtKB"/>
</dbReference>
<dbReference type="GO" id="GO:0035925">
    <property type="term" value="F:mRNA 3'-UTR AU-rich region binding"/>
    <property type="evidence" value="ECO:0000250"/>
    <property type="project" value="UniProtKB"/>
</dbReference>
<dbReference type="GO" id="GO:0003730">
    <property type="term" value="F:mRNA 3'-UTR binding"/>
    <property type="evidence" value="ECO:0000314"/>
    <property type="project" value="UniProtKB"/>
</dbReference>
<dbReference type="GO" id="GO:0000900">
    <property type="term" value="F:mRNA regulatory element binding translation repressor activity"/>
    <property type="evidence" value="ECO:0000250"/>
    <property type="project" value="UniProtKB"/>
</dbReference>
<dbReference type="GO" id="GO:0043022">
    <property type="term" value="F:ribosome binding"/>
    <property type="evidence" value="ECO:0000318"/>
    <property type="project" value="GO_Central"/>
</dbReference>
<dbReference type="GO" id="GO:0003723">
    <property type="term" value="F:RNA binding"/>
    <property type="evidence" value="ECO:0000314"/>
    <property type="project" value="UniProtKB"/>
</dbReference>
<dbReference type="GO" id="GO:0035613">
    <property type="term" value="F:RNA stem-loop binding"/>
    <property type="evidence" value="ECO:0000250"/>
    <property type="project" value="UniProtKB"/>
</dbReference>
<dbReference type="GO" id="GO:0008135">
    <property type="term" value="F:translation factor activity, RNA binding"/>
    <property type="evidence" value="ECO:0000314"/>
    <property type="project" value="UniProtKB"/>
</dbReference>
<dbReference type="GO" id="GO:0061158">
    <property type="term" value="P:3'-UTR-mediated mRNA destabilization"/>
    <property type="evidence" value="ECO:0000314"/>
    <property type="project" value="UniProtKB"/>
</dbReference>
<dbReference type="GO" id="GO:0071230">
    <property type="term" value="P:cellular response to amino acid stimulus"/>
    <property type="evidence" value="ECO:0000314"/>
    <property type="project" value="UniProtKB"/>
</dbReference>
<dbReference type="GO" id="GO:0007616">
    <property type="term" value="P:long-term memory"/>
    <property type="evidence" value="ECO:0000250"/>
    <property type="project" value="UniProtKB"/>
</dbReference>
<dbReference type="GO" id="GO:2000766">
    <property type="term" value="P:negative regulation of cytoplasmic translation"/>
    <property type="evidence" value="ECO:0000318"/>
    <property type="project" value="GO_Central"/>
</dbReference>
<dbReference type="GO" id="GO:1900248">
    <property type="term" value="P:negative regulation of cytoplasmic translational elongation"/>
    <property type="evidence" value="ECO:0000250"/>
    <property type="project" value="UniProtKB"/>
</dbReference>
<dbReference type="GO" id="GO:0000122">
    <property type="term" value="P:negative regulation of transcription by RNA polymerase II"/>
    <property type="evidence" value="ECO:0000314"/>
    <property type="project" value="UniProtKB"/>
</dbReference>
<dbReference type="GO" id="GO:0017148">
    <property type="term" value="P:negative regulation of translation"/>
    <property type="evidence" value="ECO:0000314"/>
    <property type="project" value="UniProtKB"/>
</dbReference>
<dbReference type="GO" id="GO:0060999">
    <property type="term" value="P:positive regulation of dendritic spine development"/>
    <property type="evidence" value="ECO:0000250"/>
    <property type="project" value="UniProtKB"/>
</dbReference>
<dbReference type="GO" id="GO:1900153">
    <property type="term" value="P:positive regulation of nuclear-transcribed mRNA catabolic process, deadenylation-dependent decay"/>
    <property type="evidence" value="ECO:0000314"/>
    <property type="project" value="UniProtKB"/>
</dbReference>
<dbReference type="GO" id="GO:0060213">
    <property type="term" value="P:positive regulation of nuclear-transcribed mRNA poly(A) tail shortening"/>
    <property type="evidence" value="ECO:0000314"/>
    <property type="project" value="UniProtKB"/>
</dbReference>
<dbReference type="GO" id="GO:0045727">
    <property type="term" value="P:positive regulation of translation"/>
    <property type="evidence" value="ECO:0000250"/>
    <property type="project" value="UniProtKB"/>
</dbReference>
<dbReference type="GO" id="GO:0060998">
    <property type="term" value="P:regulation of dendritic spine development"/>
    <property type="evidence" value="ECO:0000250"/>
    <property type="project" value="UniProtKB"/>
</dbReference>
<dbReference type="GO" id="GO:0048167">
    <property type="term" value="P:regulation of synaptic plasticity"/>
    <property type="evidence" value="ECO:0000250"/>
    <property type="project" value="UniProtKB"/>
</dbReference>
<dbReference type="CDD" id="cd19757">
    <property type="entry name" value="Bbox1"/>
    <property type="match status" value="1"/>
</dbReference>
<dbReference type="CDD" id="cd12724">
    <property type="entry name" value="RRM1_CPEB2_like"/>
    <property type="match status" value="1"/>
</dbReference>
<dbReference type="CDD" id="cd12726">
    <property type="entry name" value="RRM2_CPEB2_like"/>
    <property type="match status" value="1"/>
</dbReference>
<dbReference type="FunFam" id="3.30.70.330:FF:000008">
    <property type="entry name" value="Cytoplasmic polyadenylation element-binding 2 isoform X2"/>
    <property type="match status" value="1"/>
</dbReference>
<dbReference type="FunFam" id="4.10.640.40:FF:000001">
    <property type="entry name" value="Cytoplasmic polyadenylation element-binding 2 isoform X2"/>
    <property type="match status" value="1"/>
</dbReference>
<dbReference type="FunFam" id="3.30.70.330:FF:000009">
    <property type="entry name" value="cytoplasmic polyadenylation element-binding protein 2 isoform X1"/>
    <property type="match status" value="1"/>
</dbReference>
<dbReference type="Gene3D" id="3.30.70.330">
    <property type="match status" value="2"/>
</dbReference>
<dbReference type="Gene3D" id="4.10.640.40">
    <property type="entry name" value="Cytoplasmic polyadenylation element-binding protein, ZZ domain"/>
    <property type="match status" value="1"/>
</dbReference>
<dbReference type="InterPro" id="IPR032296">
    <property type="entry name" value="CEBP_ZZ"/>
</dbReference>
<dbReference type="InterPro" id="IPR038446">
    <property type="entry name" value="CEBP_ZZ_sf"/>
</dbReference>
<dbReference type="InterPro" id="IPR034819">
    <property type="entry name" value="CPEB"/>
</dbReference>
<dbReference type="InterPro" id="IPR012677">
    <property type="entry name" value="Nucleotide-bd_a/b_plait_sf"/>
</dbReference>
<dbReference type="InterPro" id="IPR035979">
    <property type="entry name" value="RBD_domain_sf"/>
</dbReference>
<dbReference type="InterPro" id="IPR000504">
    <property type="entry name" value="RRM_dom"/>
</dbReference>
<dbReference type="PANTHER" id="PTHR12566">
    <property type="entry name" value="CYTOPLASMIC POLYADENYLATION ELEMENT BINDING PROTEIN CPEB"/>
    <property type="match status" value="1"/>
</dbReference>
<dbReference type="PANTHER" id="PTHR12566:SF7">
    <property type="entry name" value="CYTOPLASMIC POLYADENYLATION ELEMENT-BINDING PROTEIN 3"/>
    <property type="match status" value="1"/>
</dbReference>
<dbReference type="Pfam" id="PF16366">
    <property type="entry name" value="CEBP_ZZ"/>
    <property type="match status" value="1"/>
</dbReference>
<dbReference type="Pfam" id="PF16367">
    <property type="entry name" value="RRM_7"/>
    <property type="match status" value="1"/>
</dbReference>
<dbReference type="SMART" id="SM00360">
    <property type="entry name" value="RRM"/>
    <property type="match status" value="2"/>
</dbReference>
<dbReference type="SUPFAM" id="SSF54928">
    <property type="entry name" value="RNA-binding domain, RBD"/>
    <property type="match status" value="1"/>
</dbReference>
<dbReference type="PROSITE" id="PS50102">
    <property type="entry name" value="RRM"/>
    <property type="match status" value="2"/>
</dbReference>
<feature type="chain" id="PRO_0000269261" description="Cytoplasmic polyadenylation element-binding protein 3">
    <location>
        <begin position="1"/>
        <end position="698"/>
    </location>
</feature>
<feature type="domain" description="RRM 1" evidence="2">
    <location>
        <begin position="441"/>
        <end position="532"/>
    </location>
</feature>
<feature type="domain" description="RRM 2" evidence="2">
    <location>
        <begin position="549"/>
        <end position="631"/>
    </location>
</feature>
<feature type="region of interest" description="Disordered" evidence="3">
    <location>
        <begin position="1"/>
        <end position="114"/>
    </location>
</feature>
<feature type="region of interest" description="Disordered" evidence="3">
    <location>
        <begin position="158"/>
        <end position="208"/>
    </location>
</feature>
<feature type="compositionally biased region" description="Basic and acidic residues" evidence="3">
    <location>
        <begin position="1"/>
        <end position="11"/>
    </location>
</feature>
<feature type="compositionally biased region" description="Low complexity" evidence="3">
    <location>
        <begin position="13"/>
        <end position="28"/>
    </location>
</feature>
<feature type="compositionally biased region" description="Polar residues" evidence="3">
    <location>
        <begin position="29"/>
        <end position="44"/>
    </location>
</feature>
<feature type="compositionally biased region" description="Pro residues" evidence="3">
    <location>
        <begin position="87"/>
        <end position="96"/>
    </location>
</feature>
<feature type="compositionally biased region" description="Polar residues" evidence="3">
    <location>
        <begin position="103"/>
        <end position="114"/>
    </location>
</feature>
<feature type="compositionally biased region" description="Pro residues" evidence="3">
    <location>
        <begin position="165"/>
        <end position="185"/>
    </location>
</feature>
<feature type="compositionally biased region" description="Low complexity" evidence="3">
    <location>
        <begin position="186"/>
        <end position="208"/>
    </location>
</feature>
<feature type="site" description="Cleavage; by CAPN2" evidence="1">
    <location>
        <begin position="441"/>
        <end position="442"/>
    </location>
</feature>
<feature type="site" description="Required for RNA-binding activity" evidence="10">
    <location>
        <position position="444"/>
    </location>
</feature>
<feature type="site" description="Required for RNA-binding activity" evidence="10">
    <location>
        <position position="488"/>
    </location>
</feature>
<feature type="modified residue" description="Phosphoserine" evidence="14">
    <location>
        <position position="192"/>
    </location>
</feature>
<feature type="modified residue" description="Phosphoserine" evidence="1">
    <location>
        <position position="195"/>
    </location>
</feature>
<feature type="modified residue" description="Phosphoserine" evidence="1">
    <location>
        <position position="290"/>
    </location>
</feature>
<feature type="modified residue" description="Asymmetric dimethylarginine" evidence="1">
    <location>
        <position position="308"/>
    </location>
</feature>
<feature type="splice variant" id="VSP_022034" description="In isoform 2." evidence="12">
    <location>
        <begin position="366"/>
        <end position="388"/>
    </location>
</feature>
<feature type="splice variant" id="VSP_022035" description="In isoform 2." evidence="12">
    <original>N</original>
    <variation>SRSSLFPFED</variation>
    <location>
        <position position="408"/>
    </location>
</feature>
<feature type="sequence variant" id="VAR_029776" description="In dbSNP:rs17853616." evidence="4">
    <original>R</original>
    <variation>W</variation>
    <location>
        <position position="324"/>
    </location>
</feature>
<feature type="mutagenesis site" description="Abolishes nuclear export; when associated with A-353." evidence="9">
    <original>L</original>
    <variation>A</variation>
    <location>
        <position position="349"/>
    </location>
</feature>
<feature type="mutagenesis site" description="Abolishes nuclear export; when associated with A-349." evidence="9">
    <original>L</original>
    <variation>A</variation>
    <location>
        <position position="353"/>
    </location>
</feature>
<feature type="mutagenesis site" description="Does not impair RNA binding." evidence="10">
    <original>R</original>
    <variation>A</variation>
    <location>
        <position position="441"/>
    </location>
</feature>
<feature type="mutagenesis site" description="Abolishes RNA binding." evidence="10">
    <original>F</original>
    <variation>A</variation>
    <variation>N</variation>
    <location>
        <position position="444"/>
    </location>
</feature>
<feature type="mutagenesis site" description="Does not impair RNA binding." evidence="10">
    <original>F</original>
    <variation>Y</variation>
    <location>
        <position position="444"/>
    </location>
</feature>
<feature type="mutagenesis site" description="Does not impair RNA binding." evidence="10">
    <original>G</original>
    <variation>A</variation>
    <location>
        <position position="446"/>
    </location>
</feature>
<feature type="mutagenesis site" description="Does not impair RNA binding." evidence="10">
    <original>R</original>
    <variation>A</variation>
    <location>
        <position position="463"/>
    </location>
</feature>
<feature type="mutagenesis site" description="Does not impair RNA binding." evidence="10">
    <original>D</original>
    <variation>A</variation>
    <location>
        <position position="470"/>
    </location>
</feature>
<feature type="mutagenesis site" description="Does not impair RNA binding." evidence="10">
    <original>K</original>
    <variation>A</variation>
    <location>
        <position position="474"/>
    </location>
</feature>
<feature type="mutagenesis site" description="Does not impair RNA binding." evidence="10">
    <original>S</original>
    <variation>A</variation>
    <location>
        <position position="479"/>
    </location>
</feature>
<feature type="mutagenesis site" description="Reduced RNA binding." evidence="10">
    <original>F</original>
    <variation>A</variation>
    <location>
        <position position="488"/>
    </location>
</feature>
<feature type="mutagenesis site" description="Does not impair RNA binding." evidence="10">
    <original>F</original>
    <variation>Y</variation>
    <location>
        <position position="488"/>
    </location>
</feature>
<feature type="mutagenesis site" description="Does not impair RNA binding." evidence="10">
    <original>R</original>
    <variation>A</variation>
    <location>
        <position position="528"/>
    </location>
</feature>
<feature type="sequence conflict" description="In Ref. 3; AAH36444." evidence="13" ref="3">
    <location>
        <position position="519"/>
    </location>
</feature>
<feature type="strand" evidence="15">
    <location>
        <begin position="443"/>
        <end position="446"/>
    </location>
</feature>
<feature type="helix" evidence="15">
    <location>
        <begin position="454"/>
        <end position="460"/>
    </location>
</feature>
<feature type="turn" evidence="15">
    <location>
        <begin position="461"/>
        <end position="464"/>
    </location>
</feature>
<feature type="strand" evidence="16">
    <location>
        <begin position="467"/>
        <end position="470"/>
    </location>
</feature>
<feature type="strand" evidence="15">
    <location>
        <begin position="474"/>
        <end position="477"/>
    </location>
</feature>
<feature type="strand" evidence="16">
    <location>
        <begin position="478"/>
        <end position="481"/>
    </location>
</feature>
<feature type="strand" evidence="15">
    <location>
        <begin position="485"/>
        <end position="489"/>
    </location>
</feature>
<feature type="helix" evidence="15">
    <location>
        <begin position="494"/>
        <end position="503"/>
    </location>
</feature>
<feature type="strand" evidence="15">
    <location>
        <begin position="504"/>
        <end position="507"/>
    </location>
</feature>
<feature type="strand" evidence="15">
    <location>
        <begin position="510"/>
        <end position="515"/>
    </location>
</feature>
<feature type="strand" evidence="15">
    <location>
        <begin position="518"/>
        <end position="520"/>
    </location>
</feature>
<feature type="strand" evidence="15">
    <location>
        <begin position="522"/>
        <end position="528"/>
    </location>
</feature>
<gene>
    <name type="primary">CPEB3</name>
    <name type="synonym">KIAA0940</name>
</gene>
<evidence type="ECO:0000250" key="1">
    <source>
        <dbReference type="UniProtKB" id="Q7TN99"/>
    </source>
</evidence>
<evidence type="ECO:0000255" key="2">
    <source>
        <dbReference type="PROSITE-ProRule" id="PRU00176"/>
    </source>
</evidence>
<evidence type="ECO:0000256" key="3">
    <source>
        <dbReference type="SAM" id="MobiDB-lite"/>
    </source>
</evidence>
<evidence type="ECO:0000269" key="4">
    <source>
    </source>
</evidence>
<evidence type="ECO:0000269" key="5">
    <source>
    </source>
</evidence>
<evidence type="ECO:0000269" key="6">
    <source>
    </source>
</evidence>
<evidence type="ECO:0000269" key="7">
    <source>
    </source>
</evidence>
<evidence type="ECO:0000269" key="8">
    <source>
    </source>
</evidence>
<evidence type="ECO:0000269" key="9">
    <source>
    </source>
</evidence>
<evidence type="ECO:0000269" key="10">
    <source>
    </source>
</evidence>
<evidence type="ECO:0000269" key="11">
    <source>
    </source>
</evidence>
<evidence type="ECO:0000303" key="12">
    <source>
    </source>
</evidence>
<evidence type="ECO:0000305" key="13"/>
<evidence type="ECO:0007744" key="14">
    <source>
    </source>
</evidence>
<evidence type="ECO:0007829" key="15">
    <source>
        <dbReference type="PDB" id="2DNL"/>
    </source>
</evidence>
<evidence type="ECO:0007829" key="16">
    <source>
        <dbReference type="PDB" id="2RUG"/>
    </source>
</evidence>
<comment type="function">
    <text evidence="1 7 8 11">Sequence-specific RNA-binding protein which acts as a translational repressor in the basal unstimulated state but, following neuronal stimulation, acts as a translational activator (By similarity). In contrast to CPEB1, does not bind to the cytoplasmic polyadenylation element (CPE), a uridine-rich sequence element within the mRNA 3'-UTR, but binds to a U-rich loop within a stem-loop structure (By similarity). Required for the consolidation and maintenance of hippocampal-based long term memory (By similarity). In the basal state, binds to the mRNA 3'-UTR of the glutamate receptors GRIA2/GLUR2 mRNA and negatively regulates their translation (By similarity). Also represses the translation of DLG4, GRIN1, GRIN2A and GRIN2B (By similarity). When activated, acts as a translational activator of GRIA1 and GRIA2 (By similarity). In the basal state, suppresses SUMO2 translation but activates it following neuronal stimulation (By similarity). Binds to the 3'-UTR of TRPV1 mRNA and represses TRPV1 translation which is required to maintain normal thermoception (By similarity). Binds actin mRNA, leading to actin translational repression in the basal state and to translational activation following neuronal stimulation (By similarity). Negatively regulates target mRNA levels by binding to TOB1 which recruits CNOT7/CAF1 to a ternary complex and this leads to target mRNA deadenylation and decay (PubMed:21336257). In addition to its role in translation, binds to and inhibits the transcriptional activation activity of STAT5B without affecting its dimerization or DNA-binding activity. This, in turn, represses transcription of the STAT5B target gene EGFR which has been shown to play a role in enhancing learning and memory performance (PubMed:20639532). In contrast to CPEB1, CPEB2 and CPEB4, not required for cell cycle progression (PubMed:26398195).</text>
</comment>
<comment type="subunit">
    <text evidence="1 7 8 9">Following synaptic activity, forms amyloid-like oligomers (By similarity). Aggregation requires an intact actin cytoskeleton (By similarity). Interacts with STAT5B; this inhibits STAT5B-mediated transcriptional activation (PubMed:20639532). Interacts with E3 ubiquitin-protein ligase NEURL1; this leads to monoubiquitination and activation of CPEB3 (By similarity). Interacts with CAPN2; this leads to cleavage of CPEB3 (By similarity). Interacts (via C-terminal RNA-binding region) with TOB1; TOB1 also binds CNOT7/CAF1 and recruits it to CPEB3 to form a ternary complex (PubMed:21336257). Interacts with SUMO-conjugating enzyme UBC9 (By similarity). Interacts with IPO5; the interaction is enhanced in a RAN-regulated manner following neuronal stimulation and mediates CPEB3 nuclear import (PubMed:22730302). Interacts with exportin XPO1/CRM1 (PubMed:22730302).</text>
</comment>
<comment type="interaction">
    <interactant intactId="EBI-8596191">
        <id>Q8NE35</id>
    </interactant>
    <interactant intactId="EBI-723281">
        <id>P50616</id>
        <label>TOB1</label>
    </interactant>
    <organismsDiffer>false</organismsDiffer>
    <experiments>7</experiments>
</comment>
<comment type="subcellular location">
    <subcellularLocation>
        <location evidence="7 9">Cytoplasm</location>
    </subcellularLocation>
    <subcellularLocation>
        <location evidence="7 9">Nucleus</location>
    </subcellularLocation>
    <subcellularLocation>
        <location evidence="1">Synapse</location>
    </subcellularLocation>
    <subcellularLocation>
        <location evidence="1">Cell projection</location>
        <location evidence="1">Dendrite</location>
    </subcellularLocation>
    <subcellularLocation>
        <location evidence="1">Postsynaptic density</location>
    </subcellularLocation>
    <text evidence="1 7 9">Predominantly cytoplasmic in unstimulated neurons but translocates to the nucleus following neuronal stimulation (PubMed:20639532, PubMed:22730302). Nuclear import is mediated by importin IPO5 (By similarity).</text>
</comment>
<comment type="alternative products">
    <event type="alternative splicing"/>
    <isoform>
        <id>Q8NE35-1</id>
        <name>1</name>
        <sequence type="displayed"/>
    </isoform>
    <isoform>
        <id>Q8NE35-2</id>
        <name>2</name>
        <sequence type="described" ref="VSP_022034 VSP_022035"/>
    </isoform>
</comment>
<comment type="domain">
    <text evidence="1">The N-terminal Gln-rich region is required for the formation of amyloid-like oligomers and for the stability of long-term potentiation and spatial memory.</text>
</comment>
<comment type="PTM">
    <text evidence="1">Activated by NEURL1-mediated monoubiquitination, resulting in the growth of new dendritic spines and increased levels of GRIA1 and GRIA2. NEURL1-mediated monoubiquitination facilitates synaptic plasticity and hippocampal-dependent memory storage.</text>
</comment>
<comment type="PTM">
    <text evidence="1">Under basal unstimulated conditions when CPEB3 is mainly unaggregated, sumoylated and acts as a translational repressor. Following neuronal stimulation, becomes desumoylated and aggregated which is required for the translation of mRNA targets and for dendritic filopodia formation.</text>
</comment>
<comment type="PTM">
    <text evidence="1">Following neuronal stimulation, cleaved by CAPN2 which abolishes its translational repressor activity, leading to translation of CPEB3 target mRNAs.</text>
</comment>
<comment type="PTM">
    <text evidence="1">Phosphorylation is enhanced by neuronal stimulation.</text>
</comment>
<comment type="miscellaneous">
    <text evidence="5 6">The CPEB3 gene contains an intron-encoded self-cleaving ribozyme which is structurally and biochemically related to human hepatitis delta virus ribozymes and which may play a role in the regulation of CPEB3 translation (PubMed:16990549). A polymorphism in the ribozyme sequence which influences cleavage activity of the ribozyme may play a role in episodic memory with carriers of a rare C allele-containing ribozyme showing significantly poorer memory recall performance than T allele carriers (PubMed:19503753).</text>
</comment>
<comment type="similarity">
    <text evidence="13">Belongs to the RRM CPEB family.</text>
</comment>
<comment type="sequence caution" evidence="13">
    <conflict type="erroneous initiation">
        <sequence resource="EMBL-CDS" id="BAA76784"/>
    </conflict>
</comment>
<comment type="online information" name="Protein Spotlight">
    <link uri="https://www.proteinspotlight.org/back_issues/185/"/>
    <text>Tenacious memory - Issue 185 of November 2016</text>
</comment>
<reference key="1">
    <citation type="journal article" date="1999" name="DNA Res.">
        <title>Prediction of the coding sequences of unidentified human genes. XIII. The complete sequences of 100 new cDNA clones from brain which code for large proteins in vitro.</title>
        <authorList>
            <person name="Nagase T."/>
            <person name="Ishikawa K."/>
            <person name="Suyama M."/>
            <person name="Kikuno R."/>
            <person name="Hirosawa M."/>
            <person name="Miyajima N."/>
            <person name="Tanaka A."/>
            <person name="Kotani H."/>
            <person name="Nomura N."/>
            <person name="Ohara O."/>
        </authorList>
    </citation>
    <scope>NUCLEOTIDE SEQUENCE [LARGE SCALE MRNA] (ISOFORM 2)</scope>
    <source>
        <tissue>Brain</tissue>
    </source>
</reference>
<reference key="2">
    <citation type="journal article" date="2004" name="Nature">
        <title>The DNA sequence and comparative analysis of human chromosome 10.</title>
        <authorList>
            <person name="Deloukas P."/>
            <person name="Earthrowl M.E."/>
            <person name="Grafham D.V."/>
            <person name="Rubenfield M."/>
            <person name="French L."/>
            <person name="Steward C.A."/>
            <person name="Sims S.K."/>
            <person name="Jones M.C."/>
            <person name="Searle S."/>
            <person name="Scott C."/>
            <person name="Howe K."/>
            <person name="Hunt S.E."/>
            <person name="Andrews T.D."/>
            <person name="Gilbert J.G.R."/>
            <person name="Swarbreck D."/>
            <person name="Ashurst J.L."/>
            <person name="Taylor A."/>
            <person name="Battles J."/>
            <person name="Bird C.P."/>
            <person name="Ainscough R."/>
            <person name="Almeida J.P."/>
            <person name="Ashwell R.I.S."/>
            <person name="Ambrose K.D."/>
            <person name="Babbage A.K."/>
            <person name="Bagguley C.L."/>
            <person name="Bailey J."/>
            <person name="Banerjee R."/>
            <person name="Bates K."/>
            <person name="Beasley H."/>
            <person name="Bray-Allen S."/>
            <person name="Brown A.J."/>
            <person name="Brown J.Y."/>
            <person name="Burford D.C."/>
            <person name="Burrill W."/>
            <person name="Burton J."/>
            <person name="Cahill P."/>
            <person name="Camire D."/>
            <person name="Carter N.P."/>
            <person name="Chapman J.C."/>
            <person name="Clark S.Y."/>
            <person name="Clarke G."/>
            <person name="Clee C.M."/>
            <person name="Clegg S."/>
            <person name="Corby N."/>
            <person name="Coulson A."/>
            <person name="Dhami P."/>
            <person name="Dutta I."/>
            <person name="Dunn M."/>
            <person name="Faulkner L."/>
            <person name="Frankish A."/>
            <person name="Frankland J.A."/>
            <person name="Garner P."/>
            <person name="Garnett J."/>
            <person name="Gribble S."/>
            <person name="Griffiths C."/>
            <person name="Grocock R."/>
            <person name="Gustafson E."/>
            <person name="Hammond S."/>
            <person name="Harley J.L."/>
            <person name="Hart E."/>
            <person name="Heath P.D."/>
            <person name="Ho T.P."/>
            <person name="Hopkins B."/>
            <person name="Horne J."/>
            <person name="Howden P.J."/>
            <person name="Huckle E."/>
            <person name="Hynds C."/>
            <person name="Johnson C."/>
            <person name="Johnson D."/>
            <person name="Kana A."/>
            <person name="Kay M."/>
            <person name="Kimberley A.M."/>
            <person name="Kershaw J.K."/>
            <person name="Kokkinaki M."/>
            <person name="Laird G.K."/>
            <person name="Lawlor S."/>
            <person name="Lee H.M."/>
            <person name="Leongamornlert D.A."/>
            <person name="Laird G."/>
            <person name="Lloyd C."/>
            <person name="Lloyd D.M."/>
            <person name="Loveland J."/>
            <person name="Lovell J."/>
            <person name="McLaren S."/>
            <person name="McLay K.E."/>
            <person name="McMurray A."/>
            <person name="Mashreghi-Mohammadi M."/>
            <person name="Matthews L."/>
            <person name="Milne S."/>
            <person name="Nickerson T."/>
            <person name="Nguyen M."/>
            <person name="Overton-Larty E."/>
            <person name="Palmer S.A."/>
            <person name="Pearce A.V."/>
            <person name="Peck A.I."/>
            <person name="Pelan S."/>
            <person name="Phillimore B."/>
            <person name="Porter K."/>
            <person name="Rice C.M."/>
            <person name="Rogosin A."/>
            <person name="Ross M.T."/>
            <person name="Sarafidou T."/>
            <person name="Sehra H.K."/>
            <person name="Shownkeen R."/>
            <person name="Skuce C.D."/>
            <person name="Smith M."/>
            <person name="Standring L."/>
            <person name="Sycamore N."/>
            <person name="Tester J."/>
            <person name="Thorpe A."/>
            <person name="Torcasso W."/>
            <person name="Tracey A."/>
            <person name="Tromans A."/>
            <person name="Tsolas J."/>
            <person name="Wall M."/>
            <person name="Walsh J."/>
            <person name="Wang H."/>
            <person name="Weinstock K."/>
            <person name="West A.P."/>
            <person name="Willey D.L."/>
            <person name="Whitehead S.L."/>
            <person name="Wilming L."/>
            <person name="Wray P.W."/>
            <person name="Young L."/>
            <person name="Chen Y."/>
            <person name="Lovering R.C."/>
            <person name="Moschonas N.K."/>
            <person name="Siebert R."/>
            <person name="Fechtel K."/>
            <person name="Bentley D."/>
            <person name="Durbin R.M."/>
            <person name="Hubbard T."/>
            <person name="Doucette-Stamm L."/>
            <person name="Beck S."/>
            <person name="Smith D.R."/>
            <person name="Rogers J."/>
        </authorList>
    </citation>
    <scope>NUCLEOTIDE SEQUENCE [LARGE SCALE GENOMIC DNA]</scope>
</reference>
<reference key="3">
    <citation type="journal article" date="2004" name="Genome Res.">
        <title>The status, quality, and expansion of the NIH full-length cDNA project: the Mammalian Gene Collection (MGC).</title>
        <authorList>
            <consortium name="The MGC Project Team"/>
        </authorList>
    </citation>
    <scope>NUCLEOTIDE SEQUENCE [LARGE SCALE MRNA] (ISOFORM 1)</scope>
    <scope>VARIANT TRP-324</scope>
    <source>
        <tissue>Testis</tissue>
    </source>
</reference>
<reference key="4">
    <citation type="journal article" date="2006" name="Science">
        <title>A genomewide search for ribozymes reveals an HDV-like sequence in the human CPEB3 gene.</title>
        <authorList>
            <person name="Salehi-Ashtiani K."/>
            <person name="Luptak A."/>
            <person name="Litovchick A."/>
            <person name="Szostak J.W."/>
        </authorList>
    </citation>
    <scope>RIBOZYME-ENCODING INTRON</scope>
</reference>
<reference key="5">
    <citation type="journal article" date="2008" name="Proc. Natl. Acad. Sci. U.S.A.">
        <title>A quantitative atlas of mitotic phosphorylation.</title>
        <authorList>
            <person name="Dephoure N."/>
            <person name="Zhou C."/>
            <person name="Villen J."/>
            <person name="Beausoleil S.A."/>
            <person name="Bakalarski C.E."/>
            <person name="Elledge S.J."/>
            <person name="Gygi S.P."/>
        </authorList>
    </citation>
    <scope>PHOSPHORYLATION [LARGE SCALE ANALYSIS] AT SER-192</scope>
    <scope>IDENTIFICATION BY MASS SPECTROMETRY [LARGE SCALE ANALYSIS]</scope>
    <source>
        <tissue>Cervix carcinoma</tissue>
    </source>
</reference>
<reference key="6">
    <citation type="journal article" date="2009" name="Front. Behav. Neurosci.">
        <title>CPEB3 is associated with human episodic memory.</title>
        <authorList>
            <person name="Vogler C."/>
            <person name="Spalek K."/>
            <person name="Aerni A."/>
            <person name="Demougin P."/>
            <person name="Mueller A."/>
            <person name="Huynh K.D."/>
            <person name="Papassotiropoulos A."/>
            <person name="de Quervain D.J."/>
        </authorList>
    </citation>
    <scope>ROLE OF RIBOZYME POLYMORPHISM IN MEMORY</scope>
</reference>
<reference key="7">
    <citation type="journal article" date="2010" name="Nucleic Acids Res.">
        <title>A novel role of CPEB3 in regulating EGFR gene transcription via association with Stat5b in neurons.</title>
        <authorList>
            <person name="Peng S.C."/>
            <person name="Lai Y.T."/>
            <person name="Huang H.Y."/>
            <person name="Huang H.D."/>
            <person name="Huang Y.S."/>
        </authorList>
    </citation>
    <scope>FUNCTION</scope>
    <scope>INTERACTION WITH STAT5B</scope>
    <scope>SUBCELLULAR LOCATION</scope>
</reference>
<reference key="8">
    <citation type="journal article" date="2011" name="EMBO J.">
        <title>Anti-proliferative protein Tob negatively regulates CPEB3 target by recruiting Caf1 deadenylase.</title>
        <authorList>
            <person name="Hosoda N."/>
            <person name="Funakoshi Y."/>
            <person name="Hirasawa M."/>
            <person name="Yamagishi R."/>
            <person name="Asano Y."/>
            <person name="Miyagawa R."/>
            <person name="Ogami K."/>
            <person name="Tsujimoto M."/>
            <person name="Hoshino S."/>
        </authorList>
    </citation>
    <scope>FUNCTION</scope>
    <scope>INTERACTION WITH TOB1</scope>
</reference>
<reference key="9">
    <citation type="journal article" date="2012" name="Nucleic Acids Res.">
        <title>NMDAR signaling facilitates the IPO5-mediated nuclear import of CPEB3.</title>
        <authorList>
            <person name="Chao H.W."/>
            <person name="Lai Y.T."/>
            <person name="Lu Y.L."/>
            <person name="Lin C.L."/>
            <person name="Mai W."/>
            <person name="Huang Y.S."/>
        </authorList>
    </citation>
    <scope>INTERACTION WITH IPO5 AND XPO1</scope>
    <scope>SUBCELLULAR LOCATION</scope>
    <scope>MUTAGENESIS OF LEU-349 AND LEU-353</scope>
</reference>
<reference key="10">
    <citation type="journal article" date="2013" name="J. Proteome Res.">
        <title>Toward a comprehensive characterization of a human cancer cell phosphoproteome.</title>
        <authorList>
            <person name="Zhou H."/>
            <person name="Di Palma S."/>
            <person name="Preisinger C."/>
            <person name="Peng M."/>
            <person name="Polat A.N."/>
            <person name="Heck A.J."/>
            <person name="Mohammed S."/>
        </authorList>
    </citation>
    <scope>IDENTIFICATION BY MASS SPECTROMETRY [LARGE SCALE ANALYSIS]</scope>
    <source>
        <tissue>Cervix carcinoma</tissue>
    </source>
</reference>
<reference key="11">
    <citation type="journal article" date="2014" name="J. Proteomics">
        <title>An enzyme assisted RP-RPLC approach for in-depth analysis of human liver phosphoproteome.</title>
        <authorList>
            <person name="Bian Y."/>
            <person name="Song C."/>
            <person name="Cheng K."/>
            <person name="Dong M."/>
            <person name="Wang F."/>
            <person name="Huang J."/>
            <person name="Sun D."/>
            <person name="Wang L."/>
            <person name="Ye M."/>
            <person name="Zou H."/>
        </authorList>
    </citation>
    <scope>IDENTIFICATION BY MASS SPECTROMETRY [LARGE SCALE ANALYSIS]</scope>
    <source>
        <tissue>Liver</tissue>
    </source>
</reference>
<reference key="12">
    <citation type="journal article" date="2014" name="Nucleic Acids Res.">
        <title>Identifying RNA-binding residues based on evolutionary conserved structural and energetic features.</title>
        <authorList>
            <person name="Chen Y.C."/>
            <person name="Sargsyan K."/>
            <person name="Wright J.D."/>
            <person name="Huang Y.S."/>
            <person name="Lim C."/>
        </authorList>
    </citation>
    <scope>SITES IMPORTANT FOR BINDING RNA</scope>
    <scope>MUTAGENESIS OF ARG-441; PHE-444; GLY-446; ARG-463; ASP-470; LYS-474; SER-479; PHE-488 AND ARG-528</scope>
</reference>
<reference key="13">
    <citation type="journal article" date="2015" name="PLoS ONE">
        <title>Global analysis of CPEBs reveals sequential and non-redundant functions in mitotic cell cycle.</title>
        <authorList>
            <person name="Giangarra V."/>
            <person name="Igea A."/>
            <person name="Castellazzi C.L."/>
            <person name="Bava F.A."/>
            <person name="Mendez R."/>
        </authorList>
    </citation>
    <scope>FUNCTION</scope>
</reference>
<reference key="14">
    <citation type="submission" date="2006-10" db="PDB data bank">
        <title>Solution structure of RNA binding domain in cytoplasmic polyadenylation element binding protein 3.</title>
        <authorList>
            <consortium name="RIKEN structural genomics initiative (RSGI)"/>
        </authorList>
    </citation>
    <scope>STRUCTURE BY NMR OF 440-540</scope>
</reference>
<reference key="15">
    <citation type="journal article" date="2014" name="Proteins">
        <title>Novel RNA recognition motif domain in the cytoplasmic polyadenylation element binding protein 3.</title>
        <authorList>
            <person name="Tsuda K."/>
            <person name="Kuwasako K."/>
            <person name="Nagata T."/>
            <person name="Takahashi M."/>
            <person name="Kigawa T."/>
            <person name="Kobayashi N."/>
            <person name="Guentert P."/>
            <person name="Shirouzu M."/>
            <person name="Yokoyama S."/>
            <person name="Muto Y."/>
        </authorList>
    </citation>
    <scope>STRUCTURE BY NMR OF 440-540</scope>
</reference>
<proteinExistence type="evidence at protein level"/>
<sequence>MQDDLLMDKSKTQPQPQQQQRQQQQPQPESSVSEAPSTPLSSETPKPEENSAVPALSPAAAPPAPNGPDKMQMESPLLPGLSFHQPPQQPPPPQEPAAPGASLSPSFGSTWSTGTTNAVEDSFFQGITPVNGTMLFQNFPHHVNPVFGGTFSPQIGLAQTQHHQQPPPPAPAPQPAQPAQPPQAQPPQQRRSPASPSQAPYAQRSAAAAYGHQPIMTSKPSSSSAVAAAAAAAAASSASSSWNTHQSVNAAWSAPSNPWGGLQAGRDPRRAVGVGVGVGVGVPSPLNPISPLKKPFSSNVIAPPKFPRAAPLTSKSWMEDNAFRTDNGNNLLPFQDRSRPYDTFNLHSLENSLMDMIRTDHEPLKGKHYPPSGPPMSFADIMWRNHFAGRMGINFHHPGTDNIMALNNAFLDDSHGDQALSSGLSSPTRCQNGERVERYSRKVFVGGLPPDIDEDEITASFRRFGPLVVDWPHKAESKSYFPPKGYAFLLFQEESSVQALIDACLEEDGKLYLCVSSPTIKDKPVQIRPWNLSDSDFVMDGSQPLDPRKTIFVGGVPRPLRAVELAMIMDRLYGGVCYAGIDTDPELKYPKGAGRVAFSNQQSYIAAISARFVQLQHNDIDKRVEVKPYVLDDQMCDECQGTRCGGKFAPFFCANVTCLQYYCEYCWASIHSRAGREFHKPLVKEGGDRPRHVPFRWS</sequence>
<name>CPEB3_HUMAN</name>